<keyword id="KW-0067">ATP-binding</keyword>
<keyword id="KW-0963">Cytoplasm</keyword>
<keyword id="KW-0418">Kinase</keyword>
<keyword id="KW-0547">Nucleotide-binding</keyword>
<keyword id="KW-0539">Nucleus</keyword>
<keyword id="KW-1185">Reference proteome</keyword>
<keyword id="KW-0690">Ribosome biogenesis</keyword>
<keyword id="KW-0698">rRNA processing</keyword>
<keyword id="KW-0808">Transferase</keyword>
<sequence>MGNEERELPNIIICGTPGTGKTTLAEQVAETTELENICIGDVVKENHLHFGFDEKWKTYDVDEDKVLDYLEPKLLKGGCIIDWHTCGLFSEELIDLVVVLRTDHSKLWERLESRGYSLEKIQENNEAEIMQICLEEARESFDPKIVVELPSESIEEMESNLSRITQWVTNWKKNH</sequence>
<feature type="chain" id="PRO_0000363367" description="Adenylate kinase isoenzyme 6 homolog">
    <location>
        <begin position="1"/>
        <end position="175"/>
    </location>
</feature>
<feature type="region of interest" description="NMPbind" evidence="1">
    <location>
        <begin position="38"/>
        <end position="61"/>
    </location>
</feature>
<feature type="region of interest" description="LID" evidence="1">
    <location>
        <begin position="113"/>
        <end position="123"/>
    </location>
</feature>
<feature type="binding site" evidence="1">
    <location>
        <position position="18"/>
    </location>
    <ligand>
        <name>ATP</name>
        <dbReference type="ChEBI" id="CHEBI:30616"/>
    </ligand>
</feature>
<feature type="binding site" evidence="1">
    <location>
        <position position="20"/>
    </location>
    <ligand>
        <name>ATP</name>
        <dbReference type="ChEBI" id="CHEBI:30616"/>
    </ligand>
</feature>
<feature type="binding site" evidence="1">
    <location>
        <position position="21"/>
    </location>
    <ligand>
        <name>ATP</name>
        <dbReference type="ChEBI" id="CHEBI:30616"/>
    </ligand>
</feature>
<feature type="binding site" evidence="1">
    <location>
        <position position="22"/>
    </location>
    <ligand>
        <name>ATP</name>
        <dbReference type="ChEBI" id="CHEBI:30616"/>
    </ligand>
</feature>
<feature type="binding site" evidence="1">
    <location>
        <position position="23"/>
    </location>
    <ligand>
        <name>ATP</name>
        <dbReference type="ChEBI" id="CHEBI:30616"/>
    </ligand>
</feature>
<feature type="binding site" evidence="1">
    <location>
        <position position="114"/>
    </location>
    <ligand>
        <name>ATP</name>
        <dbReference type="ChEBI" id="CHEBI:30616"/>
    </ligand>
</feature>
<name>KAD6_SCHPO</name>
<reference key="1">
    <citation type="journal article" date="2002" name="Nature">
        <title>The genome sequence of Schizosaccharomyces pombe.</title>
        <authorList>
            <person name="Wood V."/>
            <person name="Gwilliam R."/>
            <person name="Rajandream M.A."/>
            <person name="Lyne M.H."/>
            <person name="Lyne R."/>
            <person name="Stewart A."/>
            <person name="Sgouros J.G."/>
            <person name="Peat N."/>
            <person name="Hayles J."/>
            <person name="Baker S.G."/>
            <person name="Basham D."/>
            <person name="Bowman S."/>
            <person name="Brooks K."/>
            <person name="Brown D."/>
            <person name="Brown S."/>
            <person name="Chillingworth T."/>
            <person name="Churcher C.M."/>
            <person name="Collins M."/>
            <person name="Connor R."/>
            <person name="Cronin A."/>
            <person name="Davis P."/>
            <person name="Feltwell T."/>
            <person name="Fraser A."/>
            <person name="Gentles S."/>
            <person name="Goble A."/>
            <person name="Hamlin N."/>
            <person name="Harris D.E."/>
            <person name="Hidalgo J."/>
            <person name="Hodgson G."/>
            <person name="Holroyd S."/>
            <person name="Hornsby T."/>
            <person name="Howarth S."/>
            <person name="Huckle E.J."/>
            <person name="Hunt S."/>
            <person name="Jagels K."/>
            <person name="James K.D."/>
            <person name="Jones L."/>
            <person name="Jones M."/>
            <person name="Leather S."/>
            <person name="McDonald S."/>
            <person name="McLean J."/>
            <person name="Mooney P."/>
            <person name="Moule S."/>
            <person name="Mungall K.L."/>
            <person name="Murphy L.D."/>
            <person name="Niblett D."/>
            <person name="Odell C."/>
            <person name="Oliver K."/>
            <person name="O'Neil S."/>
            <person name="Pearson D."/>
            <person name="Quail M.A."/>
            <person name="Rabbinowitsch E."/>
            <person name="Rutherford K.M."/>
            <person name="Rutter S."/>
            <person name="Saunders D."/>
            <person name="Seeger K."/>
            <person name="Sharp S."/>
            <person name="Skelton J."/>
            <person name="Simmonds M.N."/>
            <person name="Squares R."/>
            <person name="Squares S."/>
            <person name="Stevens K."/>
            <person name="Taylor K."/>
            <person name="Taylor R.G."/>
            <person name="Tivey A."/>
            <person name="Walsh S.V."/>
            <person name="Warren T."/>
            <person name="Whitehead S."/>
            <person name="Woodward J.R."/>
            <person name="Volckaert G."/>
            <person name="Aert R."/>
            <person name="Robben J."/>
            <person name="Grymonprez B."/>
            <person name="Weltjens I."/>
            <person name="Vanstreels E."/>
            <person name="Rieger M."/>
            <person name="Schaefer M."/>
            <person name="Mueller-Auer S."/>
            <person name="Gabel C."/>
            <person name="Fuchs M."/>
            <person name="Duesterhoeft A."/>
            <person name="Fritzc C."/>
            <person name="Holzer E."/>
            <person name="Moestl D."/>
            <person name="Hilbert H."/>
            <person name="Borzym K."/>
            <person name="Langer I."/>
            <person name="Beck A."/>
            <person name="Lehrach H."/>
            <person name="Reinhardt R."/>
            <person name="Pohl T.M."/>
            <person name="Eger P."/>
            <person name="Zimmermann W."/>
            <person name="Wedler H."/>
            <person name="Wambutt R."/>
            <person name="Purnelle B."/>
            <person name="Goffeau A."/>
            <person name="Cadieu E."/>
            <person name="Dreano S."/>
            <person name="Gloux S."/>
            <person name="Lelaure V."/>
            <person name="Mottier S."/>
            <person name="Galibert F."/>
            <person name="Aves S.J."/>
            <person name="Xiang Z."/>
            <person name="Hunt C."/>
            <person name="Moore K."/>
            <person name="Hurst S.M."/>
            <person name="Lucas M."/>
            <person name="Rochet M."/>
            <person name="Gaillardin C."/>
            <person name="Tallada V.A."/>
            <person name="Garzon A."/>
            <person name="Thode G."/>
            <person name="Daga R.R."/>
            <person name="Cruzado L."/>
            <person name="Jimenez J."/>
            <person name="Sanchez M."/>
            <person name="del Rey F."/>
            <person name="Benito J."/>
            <person name="Dominguez A."/>
            <person name="Revuelta J.L."/>
            <person name="Moreno S."/>
            <person name="Armstrong J."/>
            <person name="Forsburg S.L."/>
            <person name="Cerutti L."/>
            <person name="Lowe T."/>
            <person name="McCombie W.R."/>
            <person name="Paulsen I."/>
            <person name="Potashkin J."/>
            <person name="Shpakovski G.V."/>
            <person name="Ussery D."/>
            <person name="Barrell B.G."/>
            <person name="Nurse P."/>
        </authorList>
    </citation>
    <scope>NUCLEOTIDE SEQUENCE [LARGE SCALE GENOMIC DNA]</scope>
    <source>
        <strain>972 / ATCC 24843</strain>
    </source>
</reference>
<reference key="2">
    <citation type="journal article" date="2006" name="Nat. Biotechnol.">
        <title>ORFeome cloning and global analysis of protein localization in the fission yeast Schizosaccharomyces pombe.</title>
        <authorList>
            <person name="Matsuyama A."/>
            <person name="Arai R."/>
            <person name="Yashiroda Y."/>
            <person name="Shirai A."/>
            <person name="Kamata A."/>
            <person name="Sekido S."/>
            <person name="Kobayashi Y."/>
            <person name="Hashimoto A."/>
            <person name="Hamamoto M."/>
            <person name="Hiraoka Y."/>
            <person name="Horinouchi S."/>
            <person name="Yoshida M."/>
        </authorList>
    </citation>
    <scope>SUBCELLULAR LOCATION [LARGE SCALE ANALYSIS]</scope>
</reference>
<evidence type="ECO:0000255" key="1">
    <source>
        <dbReference type="HAMAP-Rule" id="MF_03173"/>
    </source>
</evidence>
<evidence type="ECO:0000269" key="2">
    <source>
    </source>
</evidence>
<proteinExistence type="inferred from homology"/>
<accession>Q9UU88</accession>
<gene>
    <name type="primary">fap7</name>
    <name type="ORF">SPCC830.11c</name>
</gene>
<comment type="function">
    <text evidence="1">Broad-specificity nucleoside monophosphate (NMP) kinase that catalyzes the reversible transfer of the terminal phosphate group between nucleoside triphosphates and monophosphates. Also has ATPase activity. Involved in the late cytoplasmic maturation steps of the 40S ribosomal particles, specifically 18S rRNA maturation. While NMP activity is not required for ribosome maturation, ATPase activity is. Associates transiently with small ribosomal subunit protein uS11. ATP hydrolysis breaks the interaction with uS11. May temporarily remove uS11 from the ribosome to enable a conformational change of the ribosomal RNA that is needed for the final maturation step of the small ribosomal subunit. Its NMP activity may have a role in nuclear energy homeostasis.</text>
</comment>
<comment type="catalytic activity">
    <reaction evidence="1">
        <text>AMP + ATP = 2 ADP</text>
        <dbReference type="Rhea" id="RHEA:12973"/>
        <dbReference type="ChEBI" id="CHEBI:30616"/>
        <dbReference type="ChEBI" id="CHEBI:456215"/>
        <dbReference type="ChEBI" id="CHEBI:456216"/>
        <dbReference type="EC" id="2.7.4.3"/>
    </reaction>
</comment>
<comment type="catalytic activity">
    <reaction evidence="1">
        <text>ATP + H2O = ADP + phosphate + H(+)</text>
        <dbReference type="Rhea" id="RHEA:13065"/>
        <dbReference type="ChEBI" id="CHEBI:15377"/>
        <dbReference type="ChEBI" id="CHEBI:15378"/>
        <dbReference type="ChEBI" id="CHEBI:30616"/>
        <dbReference type="ChEBI" id="CHEBI:43474"/>
        <dbReference type="ChEBI" id="CHEBI:456216"/>
    </reaction>
</comment>
<comment type="subunit">
    <text evidence="1">Interacts with small ribosomal subunit protein uS11. Not a structural component of 43S pre-ribosomes, but transiently interacts with them by binding to uS11.</text>
</comment>
<comment type="subcellular location">
    <subcellularLocation>
        <location evidence="1 2">Cytoplasm</location>
    </subcellularLocation>
    <subcellularLocation>
        <location evidence="1 2">Nucleus</location>
    </subcellularLocation>
</comment>
<comment type="similarity">
    <text evidence="1">Belongs to the adenylate kinase family. AK6 subfamily.</text>
</comment>
<dbReference type="EC" id="2.7.4.3" evidence="1"/>
<dbReference type="EMBL" id="CU329672">
    <property type="protein sequence ID" value="CAB52884.1"/>
    <property type="molecule type" value="Genomic_DNA"/>
</dbReference>
<dbReference type="PIR" id="T41637">
    <property type="entry name" value="T41637"/>
</dbReference>
<dbReference type="RefSeq" id="NP_588481.1">
    <property type="nucleotide sequence ID" value="NM_001023472.2"/>
</dbReference>
<dbReference type="SMR" id="Q9UU88"/>
<dbReference type="BioGRID" id="275335">
    <property type="interactions" value="6"/>
</dbReference>
<dbReference type="FunCoup" id="Q9UU88">
    <property type="interactions" value="678"/>
</dbReference>
<dbReference type="IntAct" id="Q9UU88">
    <property type="interactions" value="2"/>
</dbReference>
<dbReference type="STRING" id="284812.Q9UU88"/>
<dbReference type="PaxDb" id="4896-SPCC830.11c.1"/>
<dbReference type="EnsemblFungi" id="SPCC830.11c.1">
    <property type="protein sequence ID" value="SPCC830.11c.1:pep"/>
    <property type="gene ID" value="SPCC830.11c"/>
</dbReference>
<dbReference type="GeneID" id="2538752"/>
<dbReference type="KEGG" id="spo:2538752"/>
<dbReference type="PomBase" id="SPCC830.11c">
    <property type="gene designation" value="fap7"/>
</dbReference>
<dbReference type="VEuPathDB" id="FungiDB:SPCC830.11c"/>
<dbReference type="eggNOG" id="KOG3347">
    <property type="taxonomic scope" value="Eukaryota"/>
</dbReference>
<dbReference type="HOGENOM" id="CLU_079096_3_1_1"/>
<dbReference type="InParanoid" id="Q9UU88"/>
<dbReference type="OMA" id="QCEIFGT"/>
<dbReference type="PhylomeDB" id="Q9UU88"/>
<dbReference type="Reactome" id="R-SPO-499943">
    <property type="pathway name" value="Interconversion of nucleotide di- and triphosphates"/>
</dbReference>
<dbReference type="PRO" id="PR:Q9UU88"/>
<dbReference type="Proteomes" id="UP000002485">
    <property type="component" value="Chromosome III"/>
</dbReference>
<dbReference type="GO" id="GO:0005737">
    <property type="term" value="C:cytoplasm"/>
    <property type="evidence" value="ECO:0000318"/>
    <property type="project" value="GO_Central"/>
</dbReference>
<dbReference type="GO" id="GO:0005829">
    <property type="term" value="C:cytosol"/>
    <property type="evidence" value="ECO:0007005"/>
    <property type="project" value="PomBase"/>
</dbReference>
<dbReference type="GO" id="GO:0005634">
    <property type="term" value="C:nucleus"/>
    <property type="evidence" value="ECO:0007005"/>
    <property type="project" value="PomBase"/>
</dbReference>
<dbReference type="GO" id="GO:0004017">
    <property type="term" value="F:adenylate kinase activity"/>
    <property type="evidence" value="ECO:0000318"/>
    <property type="project" value="GO_Central"/>
</dbReference>
<dbReference type="GO" id="GO:0005524">
    <property type="term" value="F:ATP binding"/>
    <property type="evidence" value="ECO:0000318"/>
    <property type="project" value="GO_Central"/>
</dbReference>
<dbReference type="GO" id="GO:0016887">
    <property type="term" value="F:ATP hydrolysis activity"/>
    <property type="evidence" value="ECO:0000255"/>
    <property type="project" value="PomBase"/>
</dbReference>
<dbReference type="GO" id="GO:0140597">
    <property type="term" value="F:protein carrier chaperone"/>
    <property type="evidence" value="ECO:0000266"/>
    <property type="project" value="PomBase"/>
</dbReference>
<dbReference type="GO" id="GO:0000028">
    <property type="term" value="P:ribosomal small subunit assembly"/>
    <property type="evidence" value="ECO:0000304"/>
    <property type="project" value="PomBase"/>
</dbReference>
<dbReference type="GO" id="GO:0006364">
    <property type="term" value="P:rRNA processing"/>
    <property type="evidence" value="ECO:0007669"/>
    <property type="project" value="UniProtKB-KW"/>
</dbReference>
<dbReference type="FunFam" id="3.40.50.300:FF:003001">
    <property type="entry name" value="Adenylate kinase isoenzyme 6"/>
    <property type="match status" value="1"/>
</dbReference>
<dbReference type="Gene3D" id="3.40.50.300">
    <property type="entry name" value="P-loop containing nucleotide triphosphate hydrolases"/>
    <property type="match status" value="1"/>
</dbReference>
<dbReference type="HAMAP" id="MF_00039">
    <property type="entry name" value="Adenylate_kinase_AK6"/>
    <property type="match status" value="1"/>
</dbReference>
<dbReference type="InterPro" id="IPR020618">
    <property type="entry name" value="Adenyl_kinase_AK6"/>
</dbReference>
<dbReference type="InterPro" id="IPR027417">
    <property type="entry name" value="P-loop_NTPase"/>
</dbReference>
<dbReference type="PANTHER" id="PTHR12595:SF0">
    <property type="entry name" value="ADENYLATE KINASE ISOENZYME 6"/>
    <property type="match status" value="1"/>
</dbReference>
<dbReference type="PANTHER" id="PTHR12595">
    <property type="entry name" value="POS9-ACTIVATING FACTOR FAP7-RELATED"/>
    <property type="match status" value="1"/>
</dbReference>
<dbReference type="Pfam" id="PF13238">
    <property type="entry name" value="AAA_18"/>
    <property type="match status" value="1"/>
</dbReference>
<dbReference type="SUPFAM" id="SSF52540">
    <property type="entry name" value="P-loop containing nucleoside triphosphate hydrolases"/>
    <property type="match status" value="1"/>
</dbReference>
<organism>
    <name type="scientific">Schizosaccharomyces pombe (strain 972 / ATCC 24843)</name>
    <name type="common">Fission yeast</name>
    <dbReference type="NCBI Taxonomy" id="284812"/>
    <lineage>
        <taxon>Eukaryota</taxon>
        <taxon>Fungi</taxon>
        <taxon>Dikarya</taxon>
        <taxon>Ascomycota</taxon>
        <taxon>Taphrinomycotina</taxon>
        <taxon>Schizosaccharomycetes</taxon>
        <taxon>Schizosaccharomycetales</taxon>
        <taxon>Schizosaccharomycetaceae</taxon>
        <taxon>Schizosaccharomyces</taxon>
    </lineage>
</organism>
<protein>
    <recommendedName>
        <fullName evidence="1">Adenylate kinase isoenzyme 6 homolog</fullName>
        <shortName evidence="1">AK6</shortName>
        <ecNumber evidence="1">2.7.4.3</ecNumber>
    </recommendedName>
    <alternativeName>
        <fullName evidence="1">Dual activity adenylate kinase/ATPase</fullName>
        <shortName evidence="1">AK/ATPase</shortName>
    </alternativeName>
</protein>